<reference key="1">
    <citation type="journal article" date="2011" name="Stand. Genomic Sci.">
        <title>Complete genome sequence of the filamentous gliding predatory bacterium Herpetosiphon aurantiacus type strain (114-95(T)).</title>
        <authorList>
            <person name="Kiss H."/>
            <person name="Nett M."/>
            <person name="Domin N."/>
            <person name="Martin K."/>
            <person name="Maresca J.A."/>
            <person name="Copeland A."/>
            <person name="Lapidus A."/>
            <person name="Lucas S."/>
            <person name="Berry K.W."/>
            <person name="Glavina Del Rio T."/>
            <person name="Dalin E."/>
            <person name="Tice H."/>
            <person name="Pitluck S."/>
            <person name="Richardson P."/>
            <person name="Bruce D."/>
            <person name="Goodwin L."/>
            <person name="Han C."/>
            <person name="Detter J.C."/>
            <person name="Schmutz J."/>
            <person name="Brettin T."/>
            <person name="Land M."/>
            <person name="Hauser L."/>
            <person name="Kyrpides N.C."/>
            <person name="Ivanova N."/>
            <person name="Goeker M."/>
            <person name="Woyke T."/>
            <person name="Klenk H.P."/>
            <person name="Bryant D.A."/>
        </authorList>
    </citation>
    <scope>NUCLEOTIDE SEQUENCE [LARGE SCALE GENOMIC DNA]</scope>
    <source>
        <strain>ATCC 23779 / DSM 785 / 114-95</strain>
    </source>
</reference>
<comment type="function">
    <text evidence="1">Catalyzes the conversion of (8S)-3',8-cyclo-7,8-dihydroguanosine 5'-triphosphate to cyclic pyranopterin monophosphate (cPMP).</text>
</comment>
<comment type="catalytic activity">
    <reaction evidence="1">
        <text>(8S)-3',8-cyclo-7,8-dihydroguanosine 5'-triphosphate = cyclic pyranopterin phosphate + diphosphate</text>
        <dbReference type="Rhea" id="RHEA:49580"/>
        <dbReference type="ChEBI" id="CHEBI:33019"/>
        <dbReference type="ChEBI" id="CHEBI:59648"/>
        <dbReference type="ChEBI" id="CHEBI:131766"/>
        <dbReference type="EC" id="4.6.1.17"/>
    </reaction>
</comment>
<comment type="pathway">
    <text evidence="1">Cofactor biosynthesis; molybdopterin biosynthesis.</text>
</comment>
<comment type="subunit">
    <text evidence="1">Homohexamer; trimer of dimers.</text>
</comment>
<comment type="similarity">
    <text evidence="1">Belongs to the MoaC family.</text>
</comment>
<gene>
    <name evidence="1" type="primary">moaC</name>
    <name type="ordered locus">Haur_4860</name>
</gene>
<name>MOAC_HERA2</name>
<accession>A9B327</accession>
<proteinExistence type="inferred from homology"/>
<dbReference type="EC" id="4.6.1.17" evidence="1"/>
<dbReference type="EMBL" id="CP000875">
    <property type="protein sequence ID" value="ABX07490.1"/>
    <property type="molecule type" value="Genomic_DNA"/>
</dbReference>
<dbReference type="SMR" id="A9B327"/>
<dbReference type="FunCoup" id="A9B327">
    <property type="interactions" value="381"/>
</dbReference>
<dbReference type="STRING" id="316274.Haur_4860"/>
<dbReference type="KEGG" id="hau:Haur_4860"/>
<dbReference type="eggNOG" id="COG0315">
    <property type="taxonomic scope" value="Bacteria"/>
</dbReference>
<dbReference type="HOGENOM" id="CLU_074693_1_1_0"/>
<dbReference type="InParanoid" id="A9B327"/>
<dbReference type="UniPathway" id="UPA00344"/>
<dbReference type="Proteomes" id="UP000000787">
    <property type="component" value="Chromosome"/>
</dbReference>
<dbReference type="GO" id="GO:0061799">
    <property type="term" value="F:cyclic pyranopterin monophosphate synthase activity"/>
    <property type="evidence" value="ECO:0007669"/>
    <property type="project" value="UniProtKB-UniRule"/>
</dbReference>
<dbReference type="GO" id="GO:0006777">
    <property type="term" value="P:Mo-molybdopterin cofactor biosynthetic process"/>
    <property type="evidence" value="ECO:0007669"/>
    <property type="project" value="UniProtKB-UniRule"/>
</dbReference>
<dbReference type="CDD" id="cd01420">
    <property type="entry name" value="MoaC_PE"/>
    <property type="match status" value="1"/>
</dbReference>
<dbReference type="Gene3D" id="3.30.70.640">
    <property type="entry name" value="Molybdopterin cofactor biosynthesis C (MoaC) domain"/>
    <property type="match status" value="1"/>
</dbReference>
<dbReference type="HAMAP" id="MF_01224_B">
    <property type="entry name" value="MoaC_B"/>
    <property type="match status" value="1"/>
</dbReference>
<dbReference type="InterPro" id="IPR023045">
    <property type="entry name" value="MoaC"/>
</dbReference>
<dbReference type="InterPro" id="IPR047594">
    <property type="entry name" value="MoaC_bact/euk"/>
</dbReference>
<dbReference type="InterPro" id="IPR036522">
    <property type="entry name" value="MoaC_sf"/>
</dbReference>
<dbReference type="InterPro" id="IPR050105">
    <property type="entry name" value="MoCo_biosynth_MoaA/MoaC"/>
</dbReference>
<dbReference type="InterPro" id="IPR002820">
    <property type="entry name" value="Mopterin_CF_biosynth-C_dom"/>
</dbReference>
<dbReference type="NCBIfam" id="TIGR00581">
    <property type="entry name" value="moaC"/>
    <property type="match status" value="1"/>
</dbReference>
<dbReference type="NCBIfam" id="NF006870">
    <property type="entry name" value="PRK09364.1"/>
    <property type="match status" value="1"/>
</dbReference>
<dbReference type="PANTHER" id="PTHR22960:SF29">
    <property type="entry name" value="CYCLIC PYRANOPTERIN MONOPHOSPHATE SYNTHASE"/>
    <property type="match status" value="1"/>
</dbReference>
<dbReference type="PANTHER" id="PTHR22960">
    <property type="entry name" value="MOLYBDOPTERIN COFACTOR SYNTHESIS PROTEIN A"/>
    <property type="match status" value="1"/>
</dbReference>
<dbReference type="Pfam" id="PF01967">
    <property type="entry name" value="MoaC"/>
    <property type="match status" value="1"/>
</dbReference>
<dbReference type="SUPFAM" id="SSF55040">
    <property type="entry name" value="Molybdenum cofactor biosynthesis protein C, MoaC"/>
    <property type="match status" value="1"/>
</dbReference>
<evidence type="ECO:0000255" key="1">
    <source>
        <dbReference type="HAMAP-Rule" id="MF_01224"/>
    </source>
</evidence>
<protein>
    <recommendedName>
        <fullName evidence="1">Cyclic pyranopterin monophosphate synthase</fullName>
        <ecNumber evidence="1">4.6.1.17</ecNumber>
    </recommendedName>
    <alternativeName>
        <fullName evidence="1">Molybdenum cofactor biosynthesis protein C</fullName>
    </alternativeName>
</protein>
<feature type="chain" id="PRO_1000139276" description="Cyclic pyranopterin monophosphate synthase">
    <location>
        <begin position="1"/>
        <end position="164"/>
    </location>
</feature>
<feature type="active site" evidence="1">
    <location>
        <position position="126"/>
    </location>
</feature>
<feature type="binding site" evidence="1">
    <location>
        <begin position="73"/>
        <end position="75"/>
    </location>
    <ligand>
        <name>substrate</name>
    </ligand>
</feature>
<feature type="binding site" evidence="1">
    <location>
        <begin position="111"/>
        <end position="112"/>
    </location>
    <ligand>
        <name>substrate</name>
    </ligand>
</feature>
<keyword id="KW-0456">Lyase</keyword>
<keyword id="KW-0501">Molybdenum cofactor biosynthesis</keyword>
<organism>
    <name type="scientific">Herpetosiphon aurantiacus (strain ATCC 23779 / DSM 785 / 114-95)</name>
    <dbReference type="NCBI Taxonomy" id="316274"/>
    <lineage>
        <taxon>Bacteria</taxon>
        <taxon>Bacillati</taxon>
        <taxon>Chloroflexota</taxon>
        <taxon>Chloroflexia</taxon>
        <taxon>Herpetosiphonales</taxon>
        <taxon>Herpetosiphonaceae</taxon>
        <taxon>Herpetosiphon</taxon>
    </lineage>
</organism>
<sequence length="164" mass="17518">MLTHLDDQGRAHMVDVGDKAVTQRQAQAQADVRMQPATLDLLVAGELPKGDVLATARIAGIMAAKRTADLIPLCHPLPLSSVAIEIEAHPAQSLLRIISTVRCTGRTGVEMEALMAASVAALTIYDMAKAVDRAMVIEQVFVRNKTGGARGDFQHPLTPLDTSE</sequence>